<feature type="initiator methionine" description="Removed">
    <location>
        <position position="1"/>
    </location>
</feature>
<feature type="chain" id="PRO_0000203724" description="Guanine nucleotide-binding protein G(s) subunit alpha">
    <location>
        <begin position="2"/>
        <end position="397"/>
    </location>
</feature>
<feature type="domain" description="G-alpha" evidence="5">
    <location>
        <begin position="39"/>
        <end position="397"/>
    </location>
</feature>
<feature type="region of interest" description="Disordered" evidence="6">
    <location>
        <begin position="1"/>
        <end position="23"/>
    </location>
</feature>
<feature type="region of interest" description="G1 motif" evidence="5">
    <location>
        <begin position="42"/>
        <end position="55"/>
    </location>
</feature>
<feature type="region of interest" description="G2 motif" evidence="5">
    <location>
        <begin position="181"/>
        <end position="189"/>
    </location>
</feature>
<feature type="region of interest" description="G3 motif" evidence="5">
    <location>
        <begin position="204"/>
        <end position="213"/>
    </location>
</feature>
<feature type="region of interest" description="G4 motif" evidence="5">
    <location>
        <begin position="273"/>
        <end position="280"/>
    </location>
</feature>
<feature type="region of interest" description="G5 motif" evidence="5">
    <location>
        <begin position="367"/>
        <end position="372"/>
    </location>
</feature>
<feature type="compositionally biased region" description="Basic and acidic residues" evidence="6">
    <location>
        <begin position="8"/>
        <end position="23"/>
    </location>
</feature>
<feature type="binding site" evidence="2">
    <location>
        <begin position="47"/>
        <end position="55"/>
    </location>
    <ligand>
        <name>GTP</name>
        <dbReference type="ChEBI" id="CHEBI:37565"/>
    </ligand>
</feature>
<feature type="binding site" evidence="2">
    <location>
        <position position="54"/>
    </location>
    <ligand>
        <name>Mg(2+)</name>
        <dbReference type="ChEBI" id="CHEBI:18420"/>
    </ligand>
</feature>
<feature type="binding site" evidence="2">
    <location>
        <begin position="182"/>
        <end position="189"/>
    </location>
    <ligand>
        <name>GTP</name>
        <dbReference type="ChEBI" id="CHEBI:37565"/>
    </ligand>
</feature>
<feature type="binding site" evidence="2">
    <location>
        <position position="189"/>
    </location>
    <ligand>
        <name>Mg(2+)</name>
        <dbReference type="ChEBI" id="CHEBI:18420"/>
    </ligand>
</feature>
<feature type="binding site" evidence="2">
    <location>
        <begin position="208"/>
        <end position="212"/>
    </location>
    <ligand>
        <name>GTP</name>
        <dbReference type="ChEBI" id="CHEBI:37565"/>
    </ligand>
</feature>
<feature type="binding site" evidence="2">
    <location>
        <begin position="277"/>
        <end position="280"/>
    </location>
    <ligand>
        <name>GTP</name>
        <dbReference type="ChEBI" id="CHEBI:37565"/>
    </ligand>
</feature>
<feature type="binding site" evidence="2">
    <location>
        <position position="369"/>
    </location>
    <ligand>
        <name>GTP</name>
        <dbReference type="ChEBI" id="CHEBI:37565"/>
    </ligand>
</feature>
<feature type="lipid moiety-binding region" description="N-palmitoyl glycine" evidence="2">
    <location>
        <position position="2"/>
    </location>
</feature>
<feature type="lipid moiety-binding region" description="S-palmitoyl cysteine" evidence="1">
    <location>
        <position position="3"/>
    </location>
</feature>
<organism>
    <name type="scientific">Sus scrofa</name>
    <name type="common">Pig</name>
    <dbReference type="NCBI Taxonomy" id="9823"/>
    <lineage>
        <taxon>Eukaryota</taxon>
        <taxon>Metazoa</taxon>
        <taxon>Chordata</taxon>
        <taxon>Craniata</taxon>
        <taxon>Vertebrata</taxon>
        <taxon>Euteleostomi</taxon>
        <taxon>Mammalia</taxon>
        <taxon>Eutheria</taxon>
        <taxon>Laurasiatheria</taxon>
        <taxon>Artiodactyla</taxon>
        <taxon>Suina</taxon>
        <taxon>Suidae</taxon>
        <taxon>Sus</taxon>
    </lineage>
</organism>
<evidence type="ECO:0000250" key="1"/>
<evidence type="ECO:0000250" key="2">
    <source>
        <dbReference type="UniProtKB" id="P04896"/>
    </source>
</evidence>
<evidence type="ECO:0000250" key="3">
    <source>
        <dbReference type="UniProtKB" id="P63092"/>
    </source>
</evidence>
<evidence type="ECO:0000250" key="4">
    <source>
        <dbReference type="UniProtKB" id="P63094"/>
    </source>
</evidence>
<evidence type="ECO:0000255" key="5">
    <source>
        <dbReference type="PROSITE-ProRule" id="PRU01230"/>
    </source>
</evidence>
<evidence type="ECO:0000256" key="6">
    <source>
        <dbReference type="SAM" id="MobiDB-lite"/>
    </source>
</evidence>
<evidence type="ECO:0000305" key="7"/>
<dbReference type="EMBL" id="X63893">
    <property type="protein sequence ID" value="CAA45355.1"/>
    <property type="molecule type" value="mRNA"/>
</dbReference>
<dbReference type="PIR" id="S18963">
    <property type="entry name" value="RGPGA2"/>
</dbReference>
<dbReference type="SMR" id="P29797"/>
<dbReference type="FunCoup" id="P29797">
    <property type="interactions" value="85"/>
</dbReference>
<dbReference type="STRING" id="9823.ENSSSCP00000029311"/>
<dbReference type="PaxDb" id="9823-ENSSSCP00000029311"/>
<dbReference type="PeptideAtlas" id="P29797"/>
<dbReference type="InParanoid" id="P29797"/>
<dbReference type="Proteomes" id="UP000008227">
    <property type="component" value="Unplaced"/>
</dbReference>
<dbReference type="Proteomes" id="UP000314985">
    <property type="component" value="Unplaced"/>
</dbReference>
<dbReference type="Proteomes" id="UP000694570">
    <property type="component" value="Unplaced"/>
</dbReference>
<dbReference type="Proteomes" id="UP000694571">
    <property type="component" value="Unplaced"/>
</dbReference>
<dbReference type="Proteomes" id="UP000694720">
    <property type="component" value="Unplaced"/>
</dbReference>
<dbReference type="Proteomes" id="UP000694722">
    <property type="component" value="Unplaced"/>
</dbReference>
<dbReference type="Proteomes" id="UP000694723">
    <property type="component" value="Unplaced"/>
</dbReference>
<dbReference type="Proteomes" id="UP000694724">
    <property type="component" value="Unplaced"/>
</dbReference>
<dbReference type="Proteomes" id="UP000694725">
    <property type="component" value="Unplaced"/>
</dbReference>
<dbReference type="Proteomes" id="UP000694726">
    <property type="component" value="Unplaced"/>
</dbReference>
<dbReference type="Proteomes" id="UP000694727">
    <property type="component" value="Unplaced"/>
</dbReference>
<dbReference type="Proteomes" id="UP000694728">
    <property type="component" value="Unplaced"/>
</dbReference>
<dbReference type="GO" id="GO:0005737">
    <property type="term" value="C:cytoplasm"/>
    <property type="evidence" value="ECO:0000318"/>
    <property type="project" value="GO_Central"/>
</dbReference>
<dbReference type="GO" id="GO:0005834">
    <property type="term" value="C:heterotrimeric G-protein complex"/>
    <property type="evidence" value="ECO:0000318"/>
    <property type="project" value="GO_Central"/>
</dbReference>
<dbReference type="GO" id="GO:0010856">
    <property type="term" value="F:adenylate cyclase activator activity"/>
    <property type="evidence" value="ECO:0000250"/>
    <property type="project" value="UniProtKB"/>
</dbReference>
<dbReference type="GO" id="GO:0031698">
    <property type="term" value="F:beta-2 adrenergic receptor binding"/>
    <property type="evidence" value="ECO:0000318"/>
    <property type="project" value="GO_Central"/>
</dbReference>
<dbReference type="GO" id="GO:0051430">
    <property type="term" value="F:corticotropin-releasing hormone receptor 1 binding"/>
    <property type="evidence" value="ECO:0000318"/>
    <property type="project" value="GO_Central"/>
</dbReference>
<dbReference type="GO" id="GO:0031748">
    <property type="term" value="F:D1 dopamine receptor binding"/>
    <property type="evidence" value="ECO:0000318"/>
    <property type="project" value="GO_Central"/>
</dbReference>
<dbReference type="GO" id="GO:0031683">
    <property type="term" value="F:G-protein beta/gamma-subunit complex binding"/>
    <property type="evidence" value="ECO:0000318"/>
    <property type="project" value="GO_Central"/>
</dbReference>
<dbReference type="GO" id="GO:0005525">
    <property type="term" value="F:GTP binding"/>
    <property type="evidence" value="ECO:0007669"/>
    <property type="project" value="UniProtKB-KW"/>
</dbReference>
<dbReference type="GO" id="GO:0003924">
    <property type="term" value="F:GTPase activity"/>
    <property type="evidence" value="ECO:0000318"/>
    <property type="project" value="GO_Central"/>
</dbReference>
<dbReference type="GO" id="GO:0005159">
    <property type="term" value="F:insulin-like growth factor receptor binding"/>
    <property type="evidence" value="ECO:0000318"/>
    <property type="project" value="GO_Central"/>
</dbReference>
<dbReference type="GO" id="GO:0035255">
    <property type="term" value="F:ionotropic glutamate receptor binding"/>
    <property type="evidence" value="ECO:0000318"/>
    <property type="project" value="GO_Central"/>
</dbReference>
<dbReference type="GO" id="GO:0046872">
    <property type="term" value="F:metal ion binding"/>
    <property type="evidence" value="ECO:0007669"/>
    <property type="project" value="UniProtKB-KW"/>
</dbReference>
<dbReference type="GO" id="GO:0031852">
    <property type="term" value="F:mu-type opioid receptor binding"/>
    <property type="evidence" value="ECO:0000318"/>
    <property type="project" value="GO_Central"/>
</dbReference>
<dbReference type="GO" id="GO:0071880">
    <property type="term" value="P:adenylate cyclase-activating adrenergic receptor signaling pathway"/>
    <property type="evidence" value="ECO:0000250"/>
    <property type="project" value="UniProtKB"/>
</dbReference>
<dbReference type="GO" id="GO:0007191">
    <property type="term" value="P:adenylate cyclase-activating dopamine receptor signaling pathway"/>
    <property type="evidence" value="ECO:0000318"/>
    <property type="project" value="GO_Central"/>
</dbReference>
<dbReference type="GO" id="GO:0007189">
    <property type="term" value="P:adenylate cyclase-activating G protein-coupled receptor signaling pathway"/>
    <property type="evidence" value="ECO:0000250"/>
    <property type="project" value="UniProtKB"/>
</dbReference>
<dbReference type="GO" id="GO:0007606">
    <property type="term" value="P:sensory perception of chemical stimulus"/>
    <property type="evidence" value="ECO:0000318"/>
    <property type="project" value="GO_Central"/>
</dbReference>
<dbReference type="CDD" id="cd00066">
    <property type="entry name" value="G-alpha"/>
    <property type="match status" value="1"/>
</dbReference>
<dbReference type="FunFam" id="3.40.50.300:FF:000720">
    <property type="entry name" value="Guanine nucleotide-binding protein G(k) subunit alpha"/>
    <property type="match status" value="1"/>
</dbReference>
<dbReference type="FunFam" id="1.10.400.10:FF:000003">
    <property type="entry name" value="Guanine nucleotide-binding protein G(S) subunit alpha"/>
    <property type="match status" value="1"/>
</dbReference>
<dbReference type="FunFam" id="3.40.50.300:FF:006178">
    <property type="entry name" value="Guanine nucleotide-binding protein G(s) subunit alpha isoforms short"/>
    <property type="match status" value="2"/>
</dbReference>
<dbReference type="Gene3D" id="1.10.400.10">
    <property type="entry name" value="GI Alpha 1, domain 2-like"/>
    <property type="match status" value="1"/>
</dbReference>
<dbReference type="Gene3D" id="3.40.50.300">
    <property type="entry name" value="P-loop containing nucleotide triphosphate hydrolases"/>
    <property type="match status" value="1"/>
</dbReference>
<dbReference type="InterPro" id="IPR000367">
    <property type="entry name" value="Gprotein_alpha_S"/>
</dbReference>
<dbReference type="InterPro" id="IPR001019">
    <property type="entry name" value="Gprotein_alpha_su"/>
</dbReference>
<dbReference type="InterPro" id="IPR011025">
    <property type="entry name" value="GproteinA_insert"/>
</dbReference>
<dbReference type="InterPro" id="IPR027417">
    <property type="entry name" value="P-loop_NTPase"/>
</dbReference>
<dbReference type="PANTHER" id="PTHR10218">
    <property type="entry name" value="GTP-BINDING PROTEIN ALPHA SUBUNIT"/>
    <property type="match status" value="1"/>
</dbReference>
<dbReference type="PANTHER" id="PTHR10218:SF357">
    <property type="entry name" value="GUANINE NUCLEOTIDE-BINDING PROTEIN G(S) SUBUNIT ALPHA"/>
    <property type="match status" value="1"/>
</dbReference>
<dbReference type="Pfam" id="PF00503">
    <property type="entry name" value="G-alpha"/>
    <property type="match status" value="1"/>
</dbReference>
<dbReference type="PRINTS" id="PR00318">
    <property type="entry name" value="GPROTEINA"/>
</dbReference>
<dbReference type="PRINTS" id="PR00443">
    <property type="entry name" value="GPROTEINAS"/>
</dbReference>
<dbReference type="SMART" id="SM00275">
    <property type="entry name" value="G_alpha"/>
    <property type="match status" value="1"/>
</dbReference>
<dbReference type="SUPFAM" id="SSF52540">
    <property type="entry name" value="P-loop containing nucleoside triphosphate hydrolases"/>
    <property type="match status" value="1"/>
</dbReference>
<dbReference type="SUPFAM" id="SSF47895">
    <property type="entry name" value="Transducin (alpha subunit), insertion domain"/>
    <property type="match status" value="1"/>
</dbReference>
<dbReference type="PROSITE" id="PS51882">
    <property type="entry name" value="G_ALPHA"/>
    <property type="match status" value="1"/>
</dbReference>
<reference key="1">
    <citation type="submission" date="1992-01" db="EMBL/GenBank/DDBJ databases">
        <title>Isolation and sequence of a porcine cDNA for the alpha-S subunit of the cardiac stimulatory GTP-binding protein (Gs).</title>
        <authorList>
            <person name="Roth D.A."/>
            <person name="Kay R.A.M."/>
            <person name="Hammond H.K."/>
        </authorList>
    </citation>
    <scope>NUCLEOTIDE SEQUENCE [MRNA]</scope>
    <source>
        <tissue>Heart</tissue>
    </source>
</reference>
<accession>P29797</accession>
<proteinExistence type="evidence at transcript level"/>
<sequence>MGCLGNSKTEDQRNEEKAQREANKKIEKQLQKDKQVYRATHRLLLLGAGESGKSTIVKQMRILHVNGFNGDEKATKVQDIKNNLKEAIETIVAAMSNLVPPVELANPENQFRVDYILSVMNVPDFDFPPEFYEHAKALWEDEGVRACYERSNEYQLIDCAQYFLDKIDVIKQDDYVPSDQDLLRCRVLTSGIFETKFQVDKVNFHMFDVGGQRDERRKWIQCFNDVTAIIFVVASSSYNMVIREDNQTNRLQEALNLFKSIWNNRWLRTISVILFLNKQDLLAEKVLAGKSKIELFVLDDRLFQERPFSFIEDYFPEFARYTTPEDATPEPGEDPRVTRAKYFIRDEFLRISTASGDGRHYCYPHFTCAVDTENIRRVFNDCRDIIQRMHLRQYELL</sequence>
<name>GNAS_PIG</name>
<keyword id="KW-1003">Cell membrane</keyword>
<keyword id="KW-0342">GTP-binding</keyword>
<keyword id="KW-0449">Lipoprotein</keyword>
<keyword id="KW-0460">Magnesium</keyword>
<keyword id="KW-0472">Membrane</keyword>
<keyword id="KW-0479">Metal-binding</keyword>
<keyword id="KW-0547">Nucleotide-binding</keyword>
<keyword id="KW-0564">Palmitate</keyword>
<keyword id="KW-1185">Reference proteome</keyword>
<keyword id="KW-0807">Transducer</keyword>
<comment type="function">
    <text evidence="3">Guanine nucleotide-binding proteins (G proteins) function as transducers in numerous signaling pathways controlled by G protein-coupled receptors (GPCRs). Signaling involves the activation of adenylyl cyclases, resulting in increased levels of the signaling molecule cAMP. GNAS functions downstream of several GPCRs, including beta-adrenergic receptors. Stimulates the Ras signaling pathway via RAPGEF2.</text>
</comment>
<comment type="subunit">
    <text evidence="2 3">Heterotrimeric G proteins are composed of 3 units; alpha, beta and gamma. The alpha chain contains the guanine nucleotide binding site (By similarity). Interacts with CRY1; the interaction may block GPCR-mediated regulation of cAMP concentrations. Interacts with ADCY6 and stimulates its adenylyl cyclase activity (By similarity). Interacts with ADCY2 and ADCY5 (By similarity). Stimulates the ADCY5 adenylyl cyclase activity (By similarity). Interaction with SASH1 (By similarity).</text>
</comment>
<comment type="subcellular location">
    <subcellularLocation>
        <location evidence="4">Cell membrane</location>
        <topology evidence="4">Lipid-anchor</topology>
    </subcellularLocation>
</comment>
<comment type="similarity">
    <text evidence="7">Belongs to the G-alpha family. G(s) subfamily.</text>
</comment>
<protein>
    <recommendedName>
        <fullName>Guanine nucleotide-binding protein G(s) subunit alpha</fullName>
    </recommendedName>
    <alternativeName>
        <fullName>Adenylate cyclase-stimulating G alpha protein</fullName>
    </alternativeName>
</protein>
<gene>
    <name type="primary">GNAS</name>
</gene>